<dbReference type="EC" id="3.6.-.-" evidence="1"/>
<dbReference type="EMBL" id="CU928161">
    <property type="protein sequence ID" value="CAR05336.1"/>
    <property type="molecule type" value="Genomic_DNA"/>
</dbReference>
<dbReference type="RefSeq" id="WP_001282368.1">
    <property type="nucleotide sequence ID" value="NC_011742.1"/>
</dbReference>
<dbReference type="SMR" id="B7MGC8"/>
<dbReference type="KEGG" id="ecz:ECS88_4130"/>
<dbReference type="HOGENOM" id="CLU_019624_4_1_6"/>
<dbReference type="Proteomes" id="UP000000747">
    <property type="component" value="Chromosome"/>
</dbReference>
<dbReference type="GO" id="GO:0005829">
    <property type="term" value="C:cytosol"/>
    <property type="evidence" value="ECO:0007669"/>
    <property type="project" value="TreeGrafter"/>
</dbReference>
<dbReference type="GO" id="GO:0005525">
    <property type="term" value="F:GTP binding"/>
    <property type="evidence" value="ECO:0007669"/>
    <property type="project" value="UniProtKB-UniRule"/>
</dbReference>
<dbReference type="GO" id="GO:0003924">
    <property type="term" value="F:GTPase activity"/>
    <property type="evidence" value="ECO:0007669"/>
    <property type="project" value="UniProtKB-UniRule"/>
</dbReference>
<dbReference type="GO" id="GO:0046872">
    <property type="term" value="F:metal ion binding"/>
    <property type="evidence" value="ECO:0007669"/>
    <property type="project" value="UniProtKB-KW"/>
</dbReference>
<dbReference type="GO" id="GO:0030488">
    <property type="term" value="P:tRNA methylation"/>
    <property type="evidence" value="ECO:0007669"/>
    <property type="project" value="TreeGrafter"/>
</dbReference>
<dbReference type="GO" id="GO:0002098">
    <property type="term" value="P:tRNA wobble uridine modification"/>
    <property type="evidence" value="ECO:0007669"/>
    <property type="project" value="TreeGrafter"/>
</dbReference>
<dbReference type="CDD" id="cd04164">
    <property type="entry name" value="trmE"/>
    <property type="match status" value="1"/>
</dbReference>
<dbReference type="CDD" id="cd14858">
    <property type="entry name" value="TrmE_N"/>
    <property type="match status" value="1"/>
</dbReference>
<dbReference type="FunFam" id="3.30.1360.120:FF:000001">
    <property type="entry name" value="tRNA modification GTPase MnmE"/>
    <property type="match status" value="1"/>
</dbReference>
<dbReference type="FunFam" id="3.40.50.300:FF:000249">
    <property type="entry name" value="tRNA modification GTPase MnmE"/>
    <property type="match status" value="1"/>
</dbReference>
<dbReference type="Gene3D" id="3.40.50.300">
    <property type="entry name" value="P-loop containing nucleotide triphosphate hydrolases"/>
    <property type="match status" value="1"/>
</dbReference>
<dbReference type="Gene3D" id="3.30.1360.120">
    <property type="entry name" value="Probable tRNA modification gtpase trme, domain 1"/>
    <property type="match status" value="1"/>
</dbReference>
<dbReference type="Gene3D" id="1.20.120.430">
    <property type="entry name" value="tRNA modification GTPase MnmE domain 2"/>
    <property type="match status" value="1"/>
</dbReference>
<dbReference type="HAMAP" id="MF_00379">
    <property type="entry name" value="GTPase_MnmE"/>
    <property type="match status" value="1"/>
</dbReference>
<dbReference type="InterPro" id="IPR031168">
    <property type="entry name" value="G_TrmE"/>
</dbReference>
<dbReference type="InterPro" id="IPR006073">
    <property type="entry name" value="GTP-bd"/>
</dbReference>
<dbReference type="InterPro" id="IPR018948">
    <property type="entry name" value="GTP-bd_TrmE_N"/>
</dbReference>
<dbReference type="InterPro" id="IPR004520">
    <property type="entry name" value="GTPase_MnmE"/>
</dbReference>
<dbReference type="InterPro" id="IPR027368">
    <property type="entry name" value="MnmE_dom2"/>
</dbReference>
<dbReference type="InterPro" id="IPR025867">
    <property type="entry name" value="MnmE_helical"/>
</dbReference>
<dbReference type="InterPro" id="IPR027417">
    <property type="entry name" value="P-loop_NTPase"/>
</dbReference>
<dbReference type="InterPro" id="IPR005225">
    <property type="entry name" value="Small_GTP-bd"/>
</dbReference>
<dbReference type="InterPro" id="IPR027266">
    <property type="entry name" value="TrmE/GcvT_dom1"/>
</dbReference>
<dbReference type="NCBIfam" id="TIGR00450">
    <property type="entry name" value="mnmE_trmE_thdF"/>
    <property type="match status" value="1"/>
</dbReference>
<dbReference type="NCBIfam" id="NF003661">
    <property type="entry name" value="PRK05291.1-3"/>
    <property type="match status" value="1"/>
</dbReference>
<dbReference type="NCBIfam" id="TIGR00231">
    <property type="entry name" value="small_GTP"/>
    <property type="match status" value="1"/>
</dbReference>
<dbReference type="PANTHER" id="PTHR42714">
    <property type="entry name" value="TRNA MODIFICATION GTPASE GTPBP3"/>
    <property type="match status" value="1"/>
</dbReference>
<dbReference type="PANTHER" id="PTHR42714:SF2">
    <property type="entry name" value="TRNA MODIFICATION GTPASE GTPBP3, MITOCHONDRIAL"/>
    <property type="match status" value="1"/>
</dbReference>
<dbReference type="Pfam" id="PF01926">
    <property type="entry name" value="MMR_HSR1"/>
    <property type="match status" value="1"/>
</dbReference>
<dbReference type="Pfam" id="PF12631">
    <property type="entry name" value="MnmE_helical"/>
    <property type="match status" value="1"/>
</dbReference>
<dbReference type="Pfam" id="PF10396">
    <property type="entry name" value="TrmE_N"/>
    <property type="match status" value="1"/>
</dbReference>
<dbReference type="SUPFAM" id="SSF52540">
    <property type="entry name" value="P-loop containing nucleoside triphosphate hydrolases"/>
    <property type="match status" value="1"/>
</dbReference>
<dbReference type="SUPFAM" id="SSF116878">
    <property type="entry name" value="TrmE connector domain"/>
    <property type="match status" value="1"/>
</dbReference>
<dbReference type="PROSITE" id="PS51709">
    <property type="entry name" value="G_TRME"/>
    <property type="match status" value="1"/>
</dbReference>
<evidence type="ECO:0000255" key="1">
    <source>
        <dbReference type="HAMAP-Rule" id="MF_00379"/>
    </source>
</evidence>
<accession>B7MGC8</accession>
<name>MNME_ECO45</name>
<proteinExistence type="inferred from homology"/>
<protein>
    <recommendedName>
        <fullName evidence="1">tRNA modification GTPase MnmE</fullName>
        <ecNumber evidence="1">3.6.-.-</ecNumber>
    </recommendedName>
</protein>
<sequence>MSDNDTIVAQATPPGRGGVGILRISGLKAREVAETVLGKLPKPRYADYLPFKDADGSVLDQGIALWFPGPNSFTGEDVLELQGHGGPVILDLLLKRILTIPGLRIARPGEFSERAFLNDKLDLAQAEAIADLIDASSEQAARSALNSLQGAFSARVNHLVEALTHLRIYVEAAIDFPDEEIDFLSDGKIEAQLNNVIADLDAVRAEARQGSLLREGMKVVIAGRPNAGKSSLLNALAGREAAIVTDIAGTTRDVLREHIHIDGMPLHIIDTAGLREASDEVERIGIERAWQEIEQADRVLFMVDGTTTDAVDPAEIWPEFIARLPAKLPITVVRNKADITGETLGMSEVNGHALIRLSARTGEGVDVLRNHLKQSMGFDTNMEGGFLARRRHLQALEQAAEHLQQGKAQLLGAWAGELLAEELRLAQQNLSEITGEFTSDDLLGRIFSSFCIGK</sequence>
<feature type="chain" id="PRO_1000197049" description="tRNA modification GTPase MnmE">
    <location>
        <begin position="1"/>
        <end position="454"/>
    </location>
</feature>
<feature type="domain" description="TrmE-type G">
    <location>
        <begin position="216"/>
        <end position="377"/>
    </location>
</feature>
<feature type="binding site" evidence="1">
    <location>
        <position position="23"/>
    </location>
    <ligand>
        <name>(6S)-5-formyl-5,6,7,8-tetrahydrofolate</name>
        <dbReference type="ChEBI" id="CHEBI:57457"/>
    </ligand>
</feature>
<feature type="binding site" evidence="1">
    <location>
        <position position="80"/>
    </location>
    <ligand>
        <name>(6S)-5-formyl-5,6,7,8-tetrahydrofolate</name>
        <dbReference type="ChEBI" id="CHEBI:57457"/>
    </ligand>
</feature>
<feature type="binding site" evidence="1">
    <location>
        <position position="120"/>
    </location>
    <ligand>
        <name>(6S)-5-formyl-5,6,7,8-tetrahydrofolate</name>
        <dbReference type="ChEBI" id="CHEBI:57457"/>
    </ligand>
</feature>
<feature type="binding site" evidence="1">
    <location>
        <begin position="226"/>
        <end position="231"/>
    </location>
    <ligand>
        <name>GTP</name>
        <dbReference type="ChEBI" id="CHEBI:37565"/>
    </ligand>
</feature>
<feature type="binding site" evidence="1">
    <location>
        <position position="226"/>
    </location>
    <ligand>
        <name>K(+)</name>
        <dbReference type="ChEBI" id="CHEBI:29103"/>
    </ligand>
</feature>
<feature type="binding site" evidence="1">
    <location>
        <position position="230"/>
    </location>
    <ligand>
        <name>Mg(2+)</name>
        <dbReference type="ChEBI" id="CHEBI:18420"/>
    </ligand>
</feature>
<feature type="binding site" evidence="1">
    <location>
        <begin position="245"/>
        <end position="251"/>
    </location>
    <ligand>
        <name>GTP</name>
        <dbReference type="ChEBI" id="CHEBI:37565"/>
    </ligand>
</feature>
<feature type="binding site" evidence="1">
    <location>
        <position position="245"/>
    </location>
    <ligand>
        <name>K(+)</name>
        <dbReference type="ChEBI" id="CHEBI:29103"/>
    </ligand>
</feature>
<feature type="binding site" evidence="1">
    <location>
        <position position="247"/>
    </location>
    <ligand>
        <name>K(+)</name>
        <dbReference type="ChEBI" id="CHEBI:29103"/>
    </ligand>
</feature>
<feature type="binding site" evidence="1">
    <location>
        <position position="250"/>
    </location>
    <ligand>
        <name>K(+)</name>
        <dbReference type="ChEBI" id="CHEBI:29103"/>
    </ligand>
</feature>
<feature type="binding site" evidence="1">
    <location>
        <position position="251"/>
    </location>
    <ligand>
        <name>Mg(2+)</name>
        <dbReference type="ChEBI" id="CHEBI:18420"/>
    </ligand>
</feature>
<feature type="binding site" evidence="1">
    <location>
        <begin position="270"/>
        <end position="273"/>
    </location>
    <ligand>
        <name>GTP</name>
        <dbReference type="ChEBI" id="CHEBI:37565"/>
    </ligand>
</feature>
<feature type="binding site" evidence="1">
    <location>
        <begin position="335"/>
        <end position="338"/>
    </location>
    <ligand>
        <name>GTP</name>
        <dbReference type="ChEBI" id="CHEBI:37565"/>
    </ligand>
</feature>
<feature type="binding site" evidence="1">
    <location>
        <begin position="358"/>
        <end position="360"/>
    </location>
    <ligand>
        <name>GTP</name>
        <dbReference type="ChEBI" id="CHEBI:37565"/>
    </ligand>
</feature>
<feature type="binding site" evidence="1">
    <location>
        <position position="454"/>
    </location>
    <ligand>
        <name>(6S)-5-formyl-5,6,7,8-tetrahydrofolate</name>
        <dbReference type="ChEBI" id="CHEBI:57457"/>
    </ligand>
</feature>
<comment type="function">
    <text evidence="1">Exhibits a very high intrinsic GTPase hydrolysis rate. Involved in the addition of a carboxymethylaminomethyl (cmnm) group at the wobble position (U34) of certain tRNAs, forming tRNA-cmnm(5)s(2)U34.</text>
</comment>
<comment type="cofactor">
    <cofactor evidence="1">
        <name>K(+)</name>
        <dbReference type="ChEBI" id="CHEBI:29103"/>
    </cofactor>
    <text evidence="1">Binds 1 potassium ion per subunit.</text>
</comment>
<comment type="subunit">
    <text evidence="1">Homodimer. Heterotetramer of two MnmE and two MnmG subunits.</text>
</comment>
<comment type="subcellular location">
    <subcellularLocation>
        <location evidence="1">Cytoplasm</location>
    </subcellularLocation>
</comment>
<comment type="similarity">
    <text evidence="1">Belongs to the TRAFAC class TrmE-Era-EngA-EngB-Septin-like GTPase superfamily. TrmE GTPase family.</text>
</comment>
<reference key="1">
    <citation type="journal article" date="2009" name="PLoS Genet.">
        <title>Organised genome dynamics in the Escherichia coli species results in highly diverse adaptive paths.</title>
        <authorList>
            <person name="Touchon M."/>
            <person name="Hoede C."/>
            <person name="Tenaillon O."/>
            <person name="Barbe V."/>
            <person name="Baeriswyl S."/>
            <person name="Bidet P."/>
            <person name="Bingen E."/>
            <person name="Bonacorsi S."/>
            <person name="Bouchier C."/>
            <person name="Bouvet O."/>
            <person name="Calteau A."/>
            <person name="Chiapello H."/>
            <person name="Clermont O."/>
            <person name="Cruveiller S."/>
            <person name="Danchin A."/>
            <person name="Diard M."/>
            <person name="Dossat C."/>
            <person name="Karoui M.E."/>
            <person name="Frapy E."/>
            <person name="Garry L."/>
            <person name="Ghigo J.M."/>
            <person name="Gilles A.M."/>
            <person name="Johnson J."/>
            <person name="Le Bouguenec C."/>
            <person name="Lescat M."/>
            <person name="Mangenot S."/>
            <person name="Martinez-Jehanne V."/>
            <person name="Matic I."/>
            <person name="Nassif X."/>
            <person name="Oztas S."/>
            <person name="Petit M.A."/>
            <person name="Pichon C."/>
            <person name="Rouy Z."/>
            <person name="Ruf C.S."/>
            <person name="Schneider D."/>
            <person name="Tourret J."/>
            <person name="Vacherie B."/>
            <person name="Vallenet D."/>
            <person name="Medigue C."/>
            <person name="Rocha E.P.C."/>
            <person name="Denamur E."/>
        </authorList>
    </citation>
    <scope>NUCLEOTIDE SEQUENCE [LARGE SCALE GENOMIC DNA]</scope>
    <source>
        <strain>S88 / ExPEC</strain>
    </source>
</reference>
<organism>
    <name type="scientific">Escherichia coli O45:K1 (strain S88 / ExPEC)</name>
    <dbReference type="NCBI Taxonomy" id="585035"/>
    <lineage>
        <taxon>Bacteria</taxon>
        <taxon>Pseudomonadati</taxon>
        <taxon>Pseudomonadota</taxon>
        <taxon>Gammaproteobacteria</taxon>
        <taxon>Enterobacterales</taxon>
        <taxon>Enterobacteriaceae</taxon>
        <taxon>Escherichia</taxon>
    </lineage>
</organism>
<gene>
    <name evidence="1" type="primary">mnmE</name>
    <name evidence="1" type="synonym">trmE</name>
    <name type="ordered locus">ECS88_4130</name>
</gene>
<keyword id="KW-0963">Cytoplasm</keyword>
<keyword id="KW-0342">GTP-binding</keyword>
<keyword id="KW-0378">Hydrolase</keyword>
<keyword id="KW-0460">Magnesium</keyword>
<keyword id="KW-0479">Metal-binding</keyword>
<keyword id="KW-0547">Nucleotide-binding</keyword>
<keyword id="KW-0630">Potassium</keyword>
<keyword id="KW-1185">Reference proteome</keyword>
<keyword id="KW-0819">tRNA processing</keyword>